<reference key="1">
    <citation type="journal article" date="2008" name="Genome Res.">
        <title>Comparative genome analysis of Salmonella enteritidis PT4 and Salmonella gallinarum 287/91 provides insights into evolutionary and host adaptation pathways.</title>
        <authorList>
            <person name="Thomson N.R."/>
            <person name="Clayton D.J."/>
            <person name="Windhorst D."/>
            <person name="Vernikos G."/>
            <person name="Davidson S."/>
            <person name="Churcher C."/>
            <person name="Quail M.A."/>
            <person name="Stevens M."/>
            <person name="Jones M.A."/>
            <person name="Watson M."/>
            <person name="Barron A."/>
            <person name="Layton A."/>
            <person name="Pickard D."/>
            <person name="Kingsley R.A."/>
            <person name="Bignell A."/>
            <person name="Clark L."/>
            <person name="Harris B."/>
            <person name="Ormond D."/>
            <person name="Abdellah Z."/>
            <person name="Brooks K."/>
            <person name="Cherevach I."/>
            <person name="Chillingworth T."/>
            <person name="Woodward J."/>
            <person name="Norberczak H."/>
            <person name="Lord A."/>
            <person name="Arrowsmith C."/>
            <person name="Jagels K."/>
            <person name="Moule S."/>
            <person name="Mungall K."/>
            <person name="Saunders M."/>
            <person name="Whitehead S."/>
            <person name="Chabalgoity J.A."/>
            <person name="Maskell D."/>
            <person name="Humphreys T."/>
            <person name="Roberts M."/>
            <person name="Barrow P.A."/>
            <person name="Dougan G."/>
            <person name="Parkhill J."/>
        </authorList>
    </citation>
    <scope>NUCLEOTIDE SEQUENCE [LARGE SCALE GENOMIC DNA]</scope>
    <source>
        <strain>P125109</strain>
    </source>
</reference>
<accession>B5QXC7</accession>
<keyword id="KW-0131">Cell cycle</keyword>
<keyword id="KW-0132">Cell division</keyword>
<keyword id="KW-0133">Cell shape</keyword>
<keyword id="KW-0961">Cell wall biogenesis/degradation</keyword>
<keyword id="KW-0963">Cytoplasm</keyword>
<keyword id="KW-0326">Glycosidase</keyword>
<keyword id="KW-0378">Hydrolase</keyword>
<keyword id="KW-0573">Peptidoglycan synthesis</keyword>
<organism>
    <name type="scientific">Salmonella enteritidis PT4 (strain P125109)</name>
    <dbReference type="NCBI Taxonomy" id="550537"/>
    <lineage>
        <taxon>Bacteria</taxon>
        <taxon>Pseudomonadati</taxon>
        <taxon>Pseudomonadota</taxon>
        <taxon>Gammaproteobacteria</taxon>
        <taxon>Enterobacterales</taxon>
        <taxon>Enterobacteriaceae</taxon>
        <taxon>Salmonella</taxon>
    </lineage>
</organism>
<name>NAGZ_SALEP</name>
<evidence type="ECO:0000255" key="1">
    <source>
        <dbReference type="HAMAP-Rule" id="MF_00364"/>
    </source>
</evidence>
<evidence type="ECO:0000256" key="2">
    <source>
        <dbReference type="SAM" id="MobiDB-lite"/>
    </source>
</evidence>
<proteinExistence type="inferred from homology"/>
<feature type="chain" id="PRO_1000121069" description="Beta-hexosaminidase">
    <location>
        <begin position="1"/>
        <end position="341"/>
    </location>
</feature>
<feature type="region of interest" description="Disordered" evidence="2">
    <location>
        <begin position="170"/>
        <end position="189"/>
    </location>
</feature>
<feature type="compositionally biased region" description="Basic and acidic residues" evidence="2">
    <location>
        <begin position="174"/>
        <end position="189"/>
    </location>
</feature>
<feature type="active site" description="Proton donor/acceptor" evidence="1">
    <location>
        <position position="176"/>
    </location>
</feature>
<feature type="active site" description="Nucleophile" evidence="1">
    <location>
        <position position="248"/>
    </location>
</feature>
<feature type="binding site" evidence="1">
    <location>
        <position position="62"/>
    </location>
    <ligand>
        <name>substrate</name>
    </ligand>
</feature>
<feature type="binding site" evidence="1">
    <location>
        <position position="70"/>
    </location>
    <ligand>
        <name>substrate</name>
    </ligand>
</feature>
<feature type="binding site" evidence="1">
    <location>
        <position position="133"/>
    </location>
    <ligand>
        <name>substrate</name>
    </ligand>
</feature>
<feature type="binding site" evidence="1">
    <location>
        <begin position="163"/>
        <end position="164"/>
    </location>
    <ligand>
        <name>substrate</name>
    </ligand>
</feature>
<feature type="site" description="Important for catalytic activity" evidence="1">
    <location>
        <position position="174"/>
    </location>
</feature>
<dbReference type="EC" id="3.2.1.52" evidence="1"/>
<dbReference type="EMBL" id="AM933172">
    <property type="protein sequence ID" value="CAR33420.1"/>
    <property type="molecule type" value="Genomic_DNA"/>
</dbReference>
<dbReference type="RefSeq" id="WP_000529340.1">
    <property type="nucleotide sequence ID" value="NC_011294.1"/>
</dbReference>
<dbReference type="SMR" id="B5QXC7"/>
<dbReference type="CAZy" id="GH3">
    <property type="family name" value="Glycoside Hydrolase Family 3"/>
</dbReference>
<dbReference type="KEGG" id="set:SEN1840"/>
<dbReference type="HOGENOM" id="CLU_008392_0_0_6"/>
<dbReference type="UniPathway" id="UPA00544"/>
<dbReference type="Proteomes" id="UP000000613">
    <property type="component" value="Chromosome"/>
</dbReference>
<dbReference type="GO" id="GO:0005737">
    <property type="term" value="C:cytoplasm"/>
    <property type="evidence" value="ECO:0007669"/>
    <property type="project" value="UniProtKB-SubCell"/>
</dbReference>
<dbReference type="GO" id="GO:0004563">
    <property type="term" value="F:beta-N-acetylhexosaminidase activity"/>
    <property type="evidence" value="ECO:0007669"/>
    <property type="project" value="UniProtKB-UniRule"/>
</dbReference>
<dbReference type="GO" id="GO:0005975">
    <property type="term" value="P:carbohydrate metabolic process"/>
    <property type="evidence" value="ECO:0007669"/>
    <property type="project" value="InterPro"/>
</dbReference>
<dbReference type="GO" id="GO:0051301">
    <property type="term" value="P:cell division"/>
    <property type="evidence" value="ECO:0007669"/>
    <property type="project" value="UniProtKB-KW"/>
</dbReference>
<dbReference type="GO" id="GO:0071555">
    <property type="term" value="P:cell wall organization"/>
    <property type="evidence" value="ECO:0007669"/>
    <property type="project" value="UniProtKB-KW"/>
</dbReference>
<dbReference type="GO" id="GO:0009252">
    <property type="term" value="P:peptidoglycan biosynthetic process"/>
    <property type="evidence" value="ECO:0007669"/>
    <property type="project" value="UniProtKB-KW"/>
</dbReference>
<dbReference type="GO" id="GO:0009254">
    <property type="term" value="P:peptidoglycan turnover"/>
    <property type="evidence" value="ECO:0007669"/>
    <property type="project" value="UniProtKB-UniRule"/>
</dbReference>
<dbReference type="GO" id="GO:0008360">
    <property type="term" value="P:regulation of cell shape"/>
    <property type="evidence" value="ECO:0007669"/>
    <property type="project" value="UniProtKB-KW"/>
</dbReference>
<dbReference type="FunFam" id="3.20.20.300:FF:000001">
    <property type="entry name" value="Beta-hexosaminidase"/>
    <property type="match status" value="1"/>
</dbReference>
<dbReference type="Gene3D" id="3.20.20.300">
    <property type="entry name" value="Glycoside hydrolase, family 3, N-terminal domain"/>
    <property type="match status" value="1"/>
</dbReference>
<dbReference type="HAMAP" id="MF_00364">
    <property type="entry name" value="NagZ"/>
    <property type="match status" value="1"/>
</dbReference>
<dbReference type="InterPro" id="IPR022956">
    <property type="entry name" value="Beta_hexosaminidase_bac"/>
</dbReference>
<dbReference type="InterPro" id="IPR019800">
    <property type="entry name" value="Glyco_hydro_3_AS"/>
</dbReference>
<dbReference type="InterPro" id="IPR001764">
    <property type="entry name" value="Glyco_hydro_3_N"/>
</dbReference>
<dbReference type="InterPro" id="IPR036962">
    <property type="entry name" value="Glyco_hydro_3_N_sf"/>
</dbReference>
<dbReference type="InterPro" id="IPR017853">
    <property type="entry name" value="Glycoside_hydrolase_SF"/>
</dbReference>
<dbReference type="InterPro" id="IPR050226">
    <property type="entry name" value="NagZ_Beta-hexosaminidase"/>
</dbReference>
<dbReference type="NCBIfam" id="NF003740">
    <property type="entry name" value="PRK05337.1"/>
    <property type="match status" value="1"/>
</dbReference>
<dbReference type="PANTHER" id="PTHR30480:SF13">
    <property type="entry name" value="BETA-HEXOSAMINIDASE"/>
    <property type="match status" value="1"/>
</dbReference>
<dbReference type="PANTHER" id="PTHR30480">
    <property type="entry name" value="BETA-HEXOSAMINIDASE-RELATED"/>
    <property type="match status" value="1"/>
</dbReference>
<dbReference type="Pfam" id="PF00933">
    <property type="entry name" value="Glyco_hydro_3"/>
    <property type="match status" value="1"/>
</dbReference>
<dbReference type="SUPFAM" id="SSF51445">
    <property type="entry name" value="(Trans)glycosidases"/>
    <property type="match status" value="1"/>
</dbReference>
<dbReference type="PROSITE" id="PS00775">
    <property type="entry name" value="GLYCOSYL_HYDROL_F3"/>
    <property type="match status" value="1"/>
</dbReference>
<sequence length="341" mass="37698">MGPVMLNVEGCELDAEEREILAHPLVGGLILFTRNYHDPEQLRELVRQIRAASRNHLVVAVDQEGGRVQRFREGFTRLPAAQSFFALHGLEEGGRLAQEAGWLMASEMIAMDIDISFAPVLDVGHISAAIGERSYHADPAKALAMATRFIDGMHDAGMKTTGKHFPGHGAVTADSHKETPCDPRPETDIRGKDMSVFRTLISENKLDAIMPAHVIYRAIDPRPASGSPYWLKTVLRQELGFDGVIFSDDLSMEGAAIMGSYAERAQASLDAGCDMILVCNNRKGAVSVLDNLSPIKAERVTRLYHKGSFSRRELMDSARWKTASAQLNQLHERWQEEKAGH</sequence>
<protein>
    <recommendedName>
        <fullName evidence="1">Beta-hexosaminidase</fullName>
        <ecNumber evidence="1">3.2.1.52</ecNumber>
    </recommendedName>
    <alternativeName>
        <fullName evidence="1">Beta-N-acetylhexosaminidase</fullName>
    </alternativeName>
    <alternativeName>
        <fullName evidence="1">N-acetyl-beta-glucosaminidase</fullName>
    </alternativeName>
</protein>
<gene>
    <name evidence="1" type="primary">nagZ</name>
    <name type="ordered locus">SEN1840</name>
</gene>
<comment type="function">
    <text evidence="1">Plays a role in peptidoglycan recycling by cleaving the terminal beta-1,4-linked N-acetylglucosamine (GlcNAc) from peptide-linked peptidoglycan fragments, giving rise to free GlcNAc, anhydro-N-acetylmuramic acid and anhydro-N-acetylmuramic acid-linked peptides.</text>
</comment>
<comment type="catalytic activity">
    <reaction evidence="1">
        <text>Hydrolysis of terminal non-reducing N-acetyl-D-hexosamine residues in N-acetyl-beta-D-hexosaminides.</text>
        <dbReference type="EC" id="3.2.1.52"/>
    </reaction>
</comment>
<comment type="pathway">
    <text evidence="1">Cell wall biogenesis; peptidoglycan recycling.</text>
</comment>
<comment type="subcellular location">
    <subcellularLocation>
        <location evidence="1">Cytoplasm</location>
    </subcellularLocation>
</comment>
<comment type="similarity">
    <text evidence="1">Belongs to the glycosyl hydrolase 3 family. NagZ subfamily.</text>
</comment>